<sequence length="250" mass="30208">MLFLHDVWVNWFEGEENGYNVCHFHEWRKEDSVELLDQVPLLKVQSPLYDYIENDLSELPKTLLESVFEKSYIRKNHERRKLEYCFVVTDGIRIIAVDTIGYSIPVRKSRLIPRQEQLVYEMVKDVKAEEYEFSQDSLESSKEYHILSLPPQHISGLTRKERQLKQLMFMALDQLKGLQNRAEIAYWYTEWNPRMYNQIKRMSFEEIWNMLYNETIDGWSENHLAFCEKMIKGQPFFEKLWEMENESKVN</sequence>
<accession>A8FBY4</accession>
<gene>
    <name type="ordered locus">BPUM_1067</name>
</gene>
<organism>
    <name type="scientific">Bacillus pumilus (strain SAFR-032)</name>
    <dbReference type="NCBI Taxonomy" id="315750"/>
    <lineage>
        <taxon>Bacteria</taxon>
        <taxon>Bacillati</taxon>
        <taxon>Bacillota</taxon>
        <taxon>Bacilli</taxon>
        <taxon>Bacillales</taxon>
        <taxon>Bacillaceae</taxon>
        <taxon>Bacillus</taxon>
    </lineage>
</organism>
<comment type="similarity">
    <text evidence="1">Belongs to the UPF0736 family.</text>
</comment>
<name>Y1067_BACP2</name>
<feature type="chain" id="PRO_0000369146" description="UPF0736 protein BPUM_1067">
    <location>
        <begin position="1"/>
        <end position="250"/>
    </location>
</feature>
<proteinExistence type="inferred from homology"/>
<dbReference type="EMBL" id="CP000813">
    <property type="protein sequence ID" value="ABV61751.1"/>
    <property type="molecule type" value="Genomic_DNA"/>
</dbReference>
<dbReference type="RefSeq" id="WP_012009562.1">
    <property type="nucleotide sequence ID" value="NZ_VEIS01000013.1"/>
</dbReference>
<dbReference type="SMR" id="A8FBY4"/>
<dbReference type="STRING" id="315750.BPUM_1067"/>
<dbReference type="GeneID" id="5620331"/>
<dbReference type="KEGG" id="bpu:BPUM_1067"/>
<dbReference type="eggNOG" id="ENOG502Z8PJ">
    <property type="taxonomic scope" value="Bacteria"/>
</dbReference>
<dbReference type="HOGENOM" id="CLU_1101152_0_0_9"/>
<dbReference type="OrthoDB" id="2960746at2"/>
<dbReference type="Proteomes" id="UP000001355">
    <property type="component" value="Chromosome"/>
</dbReference>
<dbReference type="HAMAP" id="MF_01860">
    <property type="entry name" value="UPF0736"/>
    <property type="match status" value="1"/>
</dbReference>
<dbReference type="InterPro" id="IPR020909">
    <property type="entry name" value="UPF0736"/>
</dbReference>
<dbReference type="Pfam" id="PF12227">
    <property type="entry name" value="DUF3603"/>
    <property type="match status" value="1"/>
</dbReference>
<protein>
    <recommendedName>
        <fullName evidence="1">UPF0736 protein BPUM_1067</fullName>
    </recommendedName>
</protein>
<evidence type="ECO:0000255" key="1">
    <source>
        <dbReference type="HAMAP-Rule" id="MF_01860"/>
    </source>
</evidence>
<reference key="1">
    <citation type="journal article" date="2007" name="PLoS ONE">
        <title>Paradoxical DNA repair and peroxide resistance gene conservation in Bacillus pumilus SAFR-032.</title>
        <authorList>
            <person name="Gioia J."/>
            <person name="Yerrapragada S."/>
            <person name="Qin X."/>
            <person name="Jiang H."/>
            <person name="Igboeli O.C."/>
            <person name="Muzny D."/>
            <person name="Dugan-Rocha S."/>
            <person name="Ding Y."/>
            <person name="Hawes A."/>
            <person name="Liu W."/>
            <person name="Perez L."/>
            <person name="Kovar C."/>
            <person name="Dinh H."/>
            <person name="Lee S."/>
            <person name="Nazareth L."/>
            <person name="Blyth P."/>
            <person name="Holder M."/>
            <person name="Buhay C."/>
            <person name="Tirumalai M.R."/>
            <person name="Liu Y."/>
            <person name="Dasgupta I."/>
            <person name="Bokhetache L."/>
            <person name="Fujita M."/>
            <person name="Karouia F."/>
            <person name="Eswara Moorthy P."/>
            <person name="Siefert J."/>
            <person name="Uzman A."/>
            <person name="Buzumbo P."/>
            <person name="Verma A."/>
            <person name="Zwiya H."/>
            <person name="McWilliams B.D."/>
            <person name="Olowu A."/>
            <person name="Clinkenbeard K.D."/>
            <person name="Newcombe D."/>
            <person name="Golebiewski L."/>
            <person name="Petrosino J.F."/>
            <person name="Nicholson W.L."/>
            <person name="Fox G.E."/>
            <person name="Venkateswaran K."/>
            <person name="Highlander S.K."/>
            <person name="Weinstock G.M."/>
        </authorList>
    </citation>
    <scope>NUCLEOTIDE SEQUENCE [LARGE SCALE GENOMIC DNA]</scope>
    <source>
        <strain>SAFR-032</strain>
    </source>
</reference>